<organism>
    <name type="scientific">Caldicellulosiruptor bescii (strain ATCC BAA-1888 / DSM 6725 / KCTC 15123 / Z-1320)</name>
    <name type="common">Anaerocellum thermophilum</name>
    <dbReference type="NCBI Taxonomy" id="521460"/>
    <lineage>
        <taxon>Bacteria</taxon>
        <taxon>Bacillati</taxon>
        <taxon>Bacillota</taxon>
        <taxon>Bacillota incertae sedis</taxon>
        <taxon>Caldicellulosiruptorales</taxon>
        <taxon>Caldicellulosiruptoraceae</taxon>
        <taxon>Caldicellulosiruptor</taxon>
    </lineage>
</organism>
<evidence type="ECO:0000255" key="1">
    <source>
        <dbReference type="HAMAP-Rule" id="MF_00274"/>
    </source>
</evidence>
<feature type="chain" id="PRO_1000197637" description="Nucleoid-associated protein Athe_1143">
    <location>
        <begin position="1"/>
        <end position="113"/>
    </location>
</feature>
<keyword id="KW-0963">Cytoplasm</keyword>
<keyword id="KW-0238">DNA-binding</keyword>
<name>Y1143_CALBD</name>
<accession>B9MRE0</accession>
<protein>
    <recommendedName>
        <fullName evidence="1">Nucleoid-associated protein Athe_1143</fullName>
    </recommendedName>
</protein>
<sequence length="113" mass="12538">MAKNKFPGLGGGFNINQLQKQARKMQEEIEKLQEELNQREIEVSSGGGAVKVVINGKKEIKSIQILPEVVDPEDVETLQDLIVACVNEAIRKVDKMVEEEMQKVTGFGIPGLF</sequence>
<reference key="1">
    <citation type="submission" date="2009-01" db="EMBL/GenBank/DDBJ databases">
        <title>Complete sequence of chromosome of Caldicellulosiruptor becscii DSM 6725.</title>
        <authorList>
            <person name="Lucas S."/>
            <person name="Copeland A."/>
            <person name="Lapidus A."/>
            <person name="Glavina del Rio T."/>
            <person name="Tice H."/>
            <person name="Bruce D."/>
            <person name="Goodwin L."/>
            <person name="Pitluck S."/>
            <person name="Sims D."/>
            <person name="Meincke L."/>
            <person name="Brettin T."/>
            <person name="Detter J.C."/>
            <person name="Han C."/>
            <person name="Larimer F."/>
            <person name="Land M."/>
            <person name="Hauser L."/>
            <person name="Kyrpides N."/>
            <person name="Ovchinnikova G."/>
            <person name="Kataeva I."/>
            <person name="Adams M.W.W."/>
        </authorList>
    </citation>
    <scope>NUCLEOTIDE SEQUENCE [LARGE SCALE GENOMIC DNA]</scope>
    <source>
        <strain>ATCC BAA-1888 / DSM 6725 / KCTC 15123 / Z-1320</strain>
    </source>
</reference>
<comment type="function">
    <text evidence="1">Binds to DNA and alters its conformation. May be involved in regulation of gene expression, nucleoid organization and DNA protection.</text>
</comment>
<comment type="subunit">
    <text evidence="1">Homodimer.</text>
</comment>
<comment type="subcellular location">
    <subcellularLocation>
        <location evidence="1">Cytoplasm</location>
        <location evidence="1">Nucleoid</location>
    </subcellularLocation>
</comment>
<comment type="similarity">
    <text evidence="1">Belongs to the YbaB/EbfC family.</text>
</comment>
<gene>
    <name type="ordered locus">Athe_1143</name>
</gene>
<proteinExistence type="inferred from homology"/>
<dbReference type="EMBL" id="CP001393">
    <property type="protein sequence ID" value="ACM60244.1"/>
    <property type="molecule type" value="Genomic_DNA"/>
</dbReference>
<dbReference type="RefSeq" id="WP_015907643.1">
    <property type="nucleotide sequence ID" value="NC_012034.1"/>
</dbReference>
<dbReference type="SMR" id="B9MRE0"/>
<dbReference type="STRING" id="521460.Athe_1143"/>
<dbReference type="GeneID" id="31772493"/>
<dbReference type="KEGG" id="ate:Athe_1143"/>
<dbReference type="eggNOG" id="COG0718">
    <property type="taxonomic scope" value="Bacteria"/>
</dbReference>
<dbReference type="HOGENOM" id="CLU_140930_1_0_9"/>
<dbReference type="Proteomes" id="UP000007723">
    <property type="component" value="Chromosome"/>
</dbReference>
<dbReference type="GO" id="GO:0043590">
    <property type="term" value="C:bacterial nucleoid"/>
    <property type="evidence" value="ECO:0007669"/>
    <property type="project" value="UniProtKB-UniRule"/>
</dbReference>
<dbReference type="GO" id="GO:0005829">
    <property type="term" value="C:cytosol"/>
    <property type="evidence" value="ECO:0007669"/>
    <property type="project" value="TreeGrafter"/>
</dbReference>
<dbReference type="GO" id="GO:0003677">
    <property type="term" value="F:DNA binding"/>
    <property type="evidence" value="ECO:0007669"/>
    <property type="project" value="UniProtKB-UniRule"/>
</dbReference>
<dbReference type="Gene3D" id="3.30.1310.10">
    <property type="entry name" value="Nucleoid-associated protein YbaB-like domain"/>
    <property type="match status" value="1"/>
</dbReference>
<dbReference type="HAMAP" id="MF_00274">
    <property type="entry name" value="DNA_YbaB_EbfC"/>
    <property type="match status" value="1"/>
</dbReference>
<dbReference type="InterPro" id="IPR036894">
    <property type="entry name" value="YbaB-like_sf"/>
</dbReference>
<dbReference type="InterPro" id="IPR004401">
    <property type="entry name" value="YbaB/EbfC"/>
</dbReference>
<dbReference type="NCBIfam" id="TIGR00103">
    <property type="entry name" value="DNA_YbaB_EbfC"/>
    <property type="match status" value="1"/>
</dbReference>
<dbReference type="PANTHER" id="PTHR33449">
    <property type="entry name" value="NUCLEOID-ASSOCIATED PROTEIN YBAB"/>
    <property type="match status" value="1"/>
</dbReference>
<dbReference type="PANTHER" id="PTHR33449:SF1">
    <property type="entry name" value="NUCLEOID-ASSOCIATED PROTEIN YBAB"/>
    <property type="match status" value="1"/>
</dbReference>
<dbReference type="Pfam" id="PF02575">
    <property type="entry name" value="YbaB_DNA_bd"/>
    <property type="match status" value="1"/>
</dbReference>
<dbReference type="PIRSF" id="PIRSF004555">
    <property type="entry name" value="UCP004555"/>
    <property type="match status" value="1"/>
</dbReference>
<dbReference type="SUPFAM" id="SSF82607">
    <property type="entry name" value="YbaB-like"/>
    <property type="match status" value="1"/>
</dbReference>